<comment type="function">
    <text evidence="1">Catalyzes the ATP-dependent phosphorylation of N-acetyl-L-glutamate.</text>
</comment>
<comment type="catalytic activity">
    <reaction evidence="1">
        <text>N-acetyl-L-glutamate + ATP = N-acetyl-L-glutamyl 5-phosphate + ADP</text>
        <dbReference type="Rhea" id="RHEA:14629"/>
        <dbReference type="ChEBI" id="CHEBI:30616"/>
        <dbReference type="ChEBI" id="CHEBI:44337"/>
        <dbReference type="ChEBI" id="CHEBI:57936"/>
        <dbReference type="ChEBI" id="CHEBI:456216"/>
        <dbReference type="EC" id="2.7.2.8"/>
    </reaction>
</comment>
<comment type="pathway">
    <text evidence="1">Amino-acid biosynthesis; L-arginine biosynthesis; N(2)-acetyl-L-ornithine from L-glutamate: step 2/4.</text>
</comment>
<comment type="subcellular location">
    <subcellularLocation>
        <location evidence="1">Cytoplasm</location>
    </subcellularLocation>
</comment>
<comment type="similarity">
    <text evidence="1">Belongs to the acetylglutamate kinase family. ArgB subfamily.</text>
</comment>
<feature type="chain" id="PRO_0000264739" description="Acetylglutamate kinase">
    <location>
        <begin position="1"/>
        <end position="299"/>
    </location>
</feature>
<feature type="binding site" evidence="1">
    <location>
        <begin position="68"/>
        <end position="69"/>
    </location>
    <ligand>
        <name>substrate</name>
    </ligand>
</feature>
<feature type="binding site" evidence="1">
    <location>
        <position position="90"/>
    </location>
    <ligand>
        <name>substrate</name>
    </ligand>
</feature>
<feature type="binding site" evidence="1">
    <location>
        <position position="194"/>
    </location>
    <ligand>
        <name>substrate</name>
    </ligand>
</feature>
<feature type="site" description="Transition state stabilizer" evidence="1">
    <location>
        <position position="33"/>
    </location>
</feature>
<feature type="site" description="Transition state stabilizer" evidence="1">
    <location>
        <position position="254"/>
    </location>
</feature>
<gene>
    <name evidence="1" type="primary">argB</name>
    <name type="ordered locus">Pcryo_0568</name>
</gene>
<name>ARGB_PSYCK</name>
<sequence length="299" mass="31604">MTLNLDEAKITAEVLTTALPYIQRFVDKIIVVKYGGNAMTDPALESSFARDIVLLKTVGMHPVVVHGGGPQVDNLLKELGRHSDRIDGMRVTDKDTMDIVEMVLGGNVNKSIVSLINKHGGCAIGLTGKDANLILAKKLMMEKIGVDGVAVPVDLGFVGDVVSVNKDVINMLIASDFIPVIAPLGVDEEGNTYNINADLVAGKVAEFLQAEKLMLLTNIKGVLGRDGEVVTGLTPKTVDSLIEDGTISGGMIPKIQCALDAVRSGVKSAVIVDGRVPHATLLEIFTNEGVGTLISRDLG</sequence>
<organism>
    <name type="scientific">Psychrobacter cryohalolentis (strain ATCC BAA-1226 / DSM 17306 / VKM B-2378 / K5)</name>
    <dbReference type="NCBI Taxonomy" id="335284"/>
    <lineage>
        <taxon>Bacteria</taxon>
        <taxon>Pseudomonadati</taxon>
        <taxon>Pseudomonadota</taxon>
        <taxon>Gammaproteobacteria</taxon>
        <taxon>Moraxellales</taxon>
        <taxon>Moraxellaceae</taxon>
        <taxon>Psychrobacter</taxon>
    </lineage>
</organism>
<evidence type="ECO:0000255" key="1">
    <source>
        <dbReference type="HAMAP-Rule" id="MF_00082"/>
    </source>
</evidence>
<protein>
    <recommendedName>
        <fullName evidence="1">Acetylglutamate kinase</fullName>
        <ecNumber evidence="1">2.7.2.8</ecNumber>
    </recommendedName>
    <alternativeName>
        <fullName evidence="1">N-acetyl-L-glutamate 5-phosphotransferase</fullName>
    </alternativeName>
    <alternativeName>
        <fullName evidence="1">NAG kinase</fullName>
        <shortName evidence="1">NAGK</shortName>
    </alternativeName>
</protein>
<accession>Q1QDA2</accession>
<proteinExistence type="inferred from homology"/>
<reference key="1">
    <citation type="submission" date="2006-03" db="EMBL/GenBank/DDBJ databases">
        <title>Complete sequence of chromosome of Psychrobacter cryohalolentis K5.</title>
        <authorList>
            <consortium name="US DOE Joint Genome Institute"/>
            <person name="Copeland A."/>
            <person name="Lucas S."/>
            <person name="Lapidus A."/>
            <person name="Barry K."/>
            <person name="Detter J.C."/>
            <person name="Glavina T."/>
            <person name="Hammon N."/>
            <person name="Israni S."/>
            <person name="Dalin E."/>
            <person name="Tice H."/>
            <person name="Pitluck S."/>
            <person name="Brettin T."/>
            <person name="Bruce D."/>
            <person name="Han C."/>
            <person name="Tapia R."/>
            <person name="Sims D.R."/>
            <person name="Gilna P."/>
            <person name="Schmutz J."/>
            <person name="Larimer F."/>
            <person name="Land M."/>
            <person name="Hauser L."/>
            <person name="Kyrpides N."/>
            <person name="Kim E."/>
            <person name="Richardson P."/>
        </authorList>
    </citation>
    <scope>NUCLEOTIDE SEQUENCE [LARGE SCALE GENOMIC DNA]</scope>
    <source>
        <strain>ATCC BAA-1226 / DSM 17306 / VKM B-2378 / K5</strain>
    </source>
</reference>
<keyword id="KW-0028">Amino-acid biosynthesis</keyword>
<keyword id="KW-0055">Arginine biosynthesis</keyword>
<keyword id="KW-0067">ATP-binding</keyword>
<keyword id="KW-0963">Cytoplasm</keyword>
<keyword id="KW-0418">Kinase</keyword>
<keyword id="KW-0547">Nucleotide-binding</keyword>
<keyword id="KW-0808">Transferase</keyword>
<dbReference type="EC" id="2.7.2.8" evidence="1"/>
<dbReference type="EMBL" id="CP000323">
    <property type="protein sequence ID" value="ABE74351.1"/>
    <property type="molecule type" value="Genomic_DNA"/>
</dbReference>
<dbReference type="RefSeq" id="WP_011512919.1">
    <property type="nucleotide sequence ID" value="NC_007969.1"/>
</dbReference>
<dbReference type="SMR" id="Q1QDA2"/>
<dbReference type="STRING" id="335284.Pcryo_0568"/>
<dbReference type="KEGG" id="pcr:Pcryo_0568"/>
<dbReference type="eggNOG" id="COG0548">
    <property type="taxonomic scope" value="Bacteria"/>
</dbReference>
<dbReference type="HOGENOM" id="CLU_053680_0_0_6"/>
<dbReference type="UniPathway" id="UPA00068">
    <property type="reaction ID" value="UER00107"/>
</dbReference>
<dbReference type="Proteomes" id="UP000002425">
    <property type="component" value="Chromosome"/>
</dbReference>
<dbReference type="GO" id="GO:0005737">
    <property type="term" value="C:cytoplasm"/>
    <property type="evidence" value="ECO:0007669"/>
    <property type="project" value="UniProtKB-SubCell"/>
</dbReference>
<dbReference type="GO" id="GO:0003991">
    <property type="term" value="F:acetylglutamate kinase activity"/>
    <property type="evidence" value="ECO:0007669"/>
    <property type="project" value="UniProtKB-UniRule"/>
</dbReference>
<dbReference type="GO" id="GO:0005524">
    <property type="term" value="F:ATP binding"/>
    <property type="evidence" value="ECO:0007669"/>
    <property type="project" value="UniProtKB-UniRule"/>
</dbReference>
<dbReference type="GO" id="GO:0042450">
    <property type="term" value="P:arginine biosynthetic process via ornithine"/>
    <property type="evidence" value="ECO:0007669"/>
    <property type="project" value="UniProtKB-UniRule"/>
</dbReference>
<dbReference type="GO" id="GO:0006526">
    <property type="term" value="P:L-arginine biosynthetic process"/>
    <property type="evidence" value="ECO:0007669"/>
    <property type="project" value="UniProtKB-UniPathway"/>
</dbReference>
<dbReference type="CDD" id="cd04250">
    <property type="entry name" value="AAK_NAGK-C"/>
    <property type="match status" value="1"/>
</dbReference>
<dbReference type="FunFam" id="3.40.1160.10:FF:000004">
    <property type="entry name" value="Acetylglutamate kinase"/>
    <property type="match status" value="1"/>
</dbReference>
<dbReference type="Gene3D" id="3.40.1160.10">
    <property type="entry name" value="Acetylglutamate kinase-like"/>
    <property type="match status" value="1"/>
</dbReference>
<dbReference type="HAMAP" id="MF_00082">
    <property type="entry name" value="ArgB"/>
    <property type="match status" value="1"/>
</dbReference>
<dbReference type="InterPro" id="IPR036393">
    <property type="entry name" value="AceGlu_kinase-like_sf"/>
</dbReference>
<dbReference type="InterPro" id="IPR004662">
    <property type="entry name" value="AcgluKinase_fam"/>
</dbReference>
<dbReference type="InterPro" id="IPR037528">
    <property type="entry name" value="ArgB"/>
</dbReference>
<dbReference type="InterPro" id="IPR001048">
    <property type="entry name" value="Asp/Glu/Uridylate_kinase"/>
</dbReference>
<dbReference type="InterPro" id="IPR001057">
    <property type="entry name" value="Glu/AcGlu_kinase"/>
</dbReference>
<dbReference type="InterPro" id="IPR041727">
    <property type="entry name" value="NAGK-C"/>
</dbReference>
<dbReference type="NCBIfam" id="TIGR00761">
    <property type="entry name" value="argB"/>
    <property type="match status" value="1"/>
</dbReference>
<dbReference type="PANTHER" id="PTHR23342">
    <property type="entry name" value="N-ACETYLGLUTAMATE SYNTHASE"/>
    <property type="match status" value="1"/>
</dbReference>
<dbReference type="PANTHER" id="PTHR23342:SF0">
    <property type="entry name" value="N-ACETYLGLUTAMATE SYNTHASE, MITOCHONDRIAL"/>
    <property type="match status" value="1"/>
</dbReference>
<dbReference type="Pfam" id="PF00696">
    <property type="entry name" value="AA_kinase"/>
    <property type="match status" value="1"/>
</dbReference>
<dbReference type="PIRSF" id="PIRSF000728">
    <property type="entry name" value="NAGK"/>
    <property type="match status" value="1"/>
</dbReference>
<dbReference type="PRINTS" id="PR00474">
    <property type="entry name" value="GLU5KINASE"/>
</dbReference>
<dbReference type="SUPFAM" id="SSF53633">
    <property type="entry name" value="Carbamate kinase-like"/>
    <property type="match status" value="1"/>
</dbReference>